<keyword id="KW-0066">ATP synthesis</keyword>
<keyword id="KW-0067">ATP-binding</keyword>
<keyword id="KW-0997">Cell inner membrane</keyword>
<keyword id="KW-1003">Cell membrane</keyword>
<keyword id="KW-0139">CF(1)</keyword>
<keyword id="KW-0375">Hydrogen ion transport</keyword>
<keyword id="KW-0406">Ion transport</keyword>
<keyword id="KW-0472">Membrane</keyword>
<keyword id="KW-0547">Nucleotide-binding</keyword>
<keyword id="KW-1185">Reference proteome</keyword>
<keyword id="KW-1278">Translocase</keyword>
<keyword id="KW-0813">Transport</keyword>
<gene>
    <name evidence="1" type="primary">atpA</name>
    <name type="ordered locus">XCC0552</name>
</gene>
<name>ATPA_XANCP</name>
<proteinExistence type="inferred from homology"/>
<sequence length="515" mass="55324">MATTLNPSEISDLIKTRIEAVKLSAESRNEGSVTSVSDGIVRIFGLADVMQGEMIELPNNTFALALNLERDSVGAVVLGDYENLREGDVAKTTGRILEVPVGPELLGRVVNALGEPIDGKGPLGATQTAPVERVAPGVIWRKSVDQPVQTGYKSVDAMIPIGRGQRELVIGDRQTGKTALAIDAVINQKGTGIKCVYVAIGQKASTVANIVRKLEENGALAHTVVVAATASESAAMQYISPYAGCTMGEYFMDRGEDALIVYDDLSKQAVAYRQISLLLKRPPGREAYPGDVFYLHSRLLERAARVSEEYVEKFTNGAVTGKTGSLTALPIIETQAGDVSAFVPTNVISITDGQIFLETDLFNAGIRPAVNAGISVSRVGGAAQTKIIKKLSGGIRISLAQYRELAAFAQFASDLDEATRKQLERGQRVTELMKQKQYAPMSIANQALSIYAVNEGYLDEVPVNKLLAFEEGLHAHFANTQGELVSKINTTGGWDNDIEAAFKKGIEEFKTTGSW</sequence>
<protein>
    <recommendedName>
        <fullName evidence="1">ATP synthase subunit alpha</fullName>
        <ecNumber evidence="1">7.1.2.2</ecNumber>
    </recommendedName>
    <alternativeName>
        <fullName evidence="1">ATP synthase F1 sector subunit alpha</fullName>
    </alternativeName>
    <alternativeName>
        <fullName evidence="1">F-ATPase subunit alpha</fullName>
    </alternativeName>
</protein>
<dbReference type="EC" id="7.1.2.2" evidence="1"/>
<dbReference type="EMBL" id="AE008922">
    <property type="protein sequence ID" value="AAM39868.1"/>
    <property type="molecule type" value="Genomic_DNA"/>
</dbReference>
<dbReference type="RefSeq" id="NP_635944.1">
    <property type="nucleotide sequence ID" value="NC_003902.1"/>
</dbReference>
<dbReference type="RefSeq" id="WP_011035799.1">
    <property type="nucleotide sequence ID" value="NC_003902.1"/>
</dbReference>
<dbReference type="SMR" id="Q8PCZ7"/>
<dbReference type="STRING" id="190485.XCC0552"/>
<dbReference type="EnsemblBacteria" id="AAM39868">
    <property type="protein sequence ID" value="AAM39868"/>
    <property type="gene ID" value="XCC0552"/>
</dbReference>
<dbReference type="GeneID" id="58014887"/>
<dbReference type="KEGG" id="xcc:XCC0552"/>
<dbReference type="PATRIC" id="fig|190485.4.peg.609"/>
<dbReference type="eggNOG" id="COG0056">
    <property type="taxonomic scope" value="Bacteria"/>
</dbReference>
<dbReference type="HOGENOM" id="CLU_010091_2_1_6"/>
<dbReference type="OrthoDB" id="9803053at2"/>
<dbReference type="Proteomes" id="UP000001010">
    <property type="component" value="Chromosome"/>
</dbReference>
<dbReference type="GO" id="GO:0005886">
    <property type="term" value="C:plasma membrane"/>
    <property type="evidence" value="ECO:0007669"/>
    <property type="project" value="UniProtKB-SubCell"/>
</dbReference>
<dbReference type="GO" id="GO:0045259">
    <property type="term" value="C:proton-transporting ATP synthase complex"/>
    <property type="evidence" value="ECO:0007669"/>
    <property type="project" value="UniProtKB-KW"/>
</dbReference>
<dbReference type="GO" id="GO:0043531">
    <property type="term" value="F:ADP binding"/>
    <property type="evidence" value="ECO:0000318"/>
    <property type="project" value="GO_Central"/>
</dbReference>
<dbReference type="GO" id="GO:0005524">
    <property type="term" value="F:ATP binding"/>
    <property type="evidence" value="ECO:0000318"/>
    <property type="project" value="GO_Central"/>
</dbReference>
<dbReference type="GO" id="GO:0046933">
    <property type="term" value="F:proton-transporting ATP synthase activity, rotational mechanism"/>
    <property type="evidence" value="ECO:0007669"/>
    <property type="project" value="UniProtKB-UniRule"/>
</dbReference>
<dbReference type="GO" id="GO:0015986">
    <property type="term" value="P:proton motive force-driven ATP synthesis"/>
    <property type="evidence" value="ECO:0000318"/>
    <property type="project" value="GO_Central"/>
</dbReference>
<dbReference type="CDD" id="cd18113">
    <property type="entry name" value="ATP-synt_F1_alpha_C"/>
    <property type="match status" value="1"/>
</dbReference>
<dbReference type="CDD" id="cd18116">
    <property type="entry name" value="ATP-synt_F1_alpha_N"/>
    <property type="match status" value="1"/>
</dbReference>
<dbReference type="CDD" id="cd01132">
    <property type="entry name" value="F1-ATPase_alpha_CD"/>
    <property type="match status" value="1"/>
</dbReference>
<dbReference type="FunFam" id="1.20.150.20:FF:000001">
    <property type="entry name" value="ATP synthase subunit alpha"/>
    <property type="match status" value="1"/>
</dbReference>
<dbReference type="FunFam" id="2.40.30.20:FF:000001">
    <property type="entry name" value="ATP synthase subunit alpha"/>
    <property type="match status" value="1"/>
</dbReference>
<dbReference type="FunFam" id="3.40.50.300:FF:000002">
    <property type="entry name" value="ATP synthase subunit alpha"/>
    <property type="match status" value="1"/>
</dbReference>
<dbReference type="Gene3D" id="2.40.30.20">
    <property type="match status" value="1"/>
</dbReference>
<dbReference type="Gene3D" id="1.20.150.20">
    <property type="entry name" value="ATP synthase alpha/beta chain, C-terminal domain"/>
    <property type="match status" value="1"/>
</dbReference>
<dbReference type="Gene3D" id="3.40.50.300">
    <property type="entry name" value="P-loop containing nucleotide triphosphate hydrolases"/>
    <property type="match status" value="1"/>
</dbReference>
<dbReference type="HAMAP" id="MF_01346">
    <property type="entry name" value="ATP_synth_alpha_bact"/>
    <property type="match status" value="1"/>
</dbReference>
<dbReference type="InterPro" id="IPR023366">
    <property type="entry name" value="ATP_synth_asu-like_sf"/>
</dbReference>
<dbReference type="InterPro" id="IPR000793">
    <property type="entry name" value="ATP_synth_asu_C"/>
</dbReference>
<dbReference type="InterPro" id="IPR038376">
    <property type="entry name" value="ATP_synth_asu_C_sf"/>
</dbReference>
<dbReference type="InterPro" id="IPR033732">
    <property type="entry name" value="ATP_synth_F1_a_nt-bd_dom"/>
</dbReference>
<dbReference type="InterPro" id="IPR005294">
    <property type="entry name" value="ATP_synth_F1_asu"/>
</dbReference>
<dbReference type="InterPro" id="IPR020003">
    <property type="entry name" value="ATPase_a/bsu_AS"/>
</dbReference>
<dbReference type="InterPro" id="IPR004100">
    <property type="entry name" value="ATPase_F1/V1/A1_a/bsu_N"/>
</dbReference>
<dbReference type="InterPro" id="IPR036121">
    <property type="entry name" value="ATPase_F1/V1/A1_a/bsu_N_sf"/>
</dbReference>
<dbReference type="InterPro" id="IPR000194">
    <property type="entry name" value="ATPase_F1/V1/A1_a/bsu_nucl-bd"/>
</dbReference>
<dbReference type="InterPro" id="IPR027417">
    <property type="entry name" value="P-loop_NTPase"/>
</dbReference>
<dbReference type="NCBIfam" id="TIGR00962">
    <property type="entry name" value="atpA"/>
    <property type="match status" value="1"/>
</dbReference>
<dbReference type="NCBIfam" id="NF009884">
    <property type="entry name" value="PRK13343.1"/>
    <property type="match status" value="1"/>
</dbReference>
<dbReference type="PANTHER" id="PTHR48082">
    <property type="entry name" value="ATP SYNTHASE SUBUNIT ALPHA, MITOCHONDRIAL"/>
    <property type="match status" value="1"/>
</dbReference>
<dbReference type="PANTHER" id="PTHR48082:SF2">
    <property type="entry name" value="ATP SYNTHASE SUBUNIT ALPHA, MITOCHONDRIAL"/>
    <property type="match status" value="1"/>
</dbReference>
<dbReference type="Pfam" id="PF00006">
    <property type="entry name" value="ATP-synt_ab"/>
    <property type="match status" value="1"/>
</dbReference>
<dbReference type="Pfam" id="PF00306">
    <property type="entry name" value="ATP-synt_ab_C"/>
    <property type="match status" value="1"/>
</dbReference>
<dbReference type="Pfam" id="PF02874">
    <property type="entry name" value="ATP-synt_ab_N"/>
    <property type="match status" value="1"/>
</dbReference>
<dbReference type="SUPFAM" id="SSF47917">
    <property type="entry name" value="C-terminal domain of alpha and beta subunits of F1 ATP synthase"/>
    <property type="match status" value="1"/>
</dbReference>
<dbReference type="SUPFAM" id="SSF50615">
    <property type="entry name" value="N-terminal domain of alpha and beta subunits of F1 ATP synthase"/>
    <property type="match status" value="1"/>
</dbReference>
<dbReference type="SUPFAM" id="SSF52540">
    <property type="entry name" value="P-loop containing nucleoside triphosphate hydrolases"/>
    <property type="match status" value="1"/>
</dbReference>
<dbReference type="PROSITE" id="PS00152">
    <property type="entry name" value="ATPASE_ALPHA_BETA"/>
    <property type="match status" value="1"/>
</dbReference>
<feature type="chain" id="PRO_0000238403" description="ATP synthase subunit alpha">
    <location>
        <begin position="1"/>
        <end position="515"/>
    </location>
</feature>
<feature type="binding site" evidence="1">
    <location>
        <begin position="171"/>
        <end position="178"/>
    </location>
    <ligand>
        <name>ATP</name>
        <dbReference type="ChEBI" id="CHEBI:30616"/>
    </ligand>
</feature>
<feature type="site" description="Required for activity" evidence="1">
    <location>
        <position position="375"/>
    </location>
</feature>
<accession>Q8PCZ7</accession>
<organism>
    <name type="scientific">Xanthomonas campestris pv. campestris (strain ATCC 33913 / DSM 3586 / NCPPB 528 / LMG 568 / P 25)</name>
    <dbReference type="NCBI Taxonomy" id="190485"/>
    <lineage>
        <taxon>Bacteria</taxon>
        <taxon>Pseudomonadati</taxon>
        <taxon>Pseudomonadota</taxon>
        <taxon>Gammaproteobacteria</taxon>
        <taxon>Lysobacterales</taxon>
        <taxon>Lysobacteraceae</taxon>
        <taxon>Xanthomonas</taxon>
    </lineage>
</organism>
<evidence type="ECO:0000255" key="1">
    <source>
        <dbReference type="HAMAP-Rule" id="MF_01346"/>
    </source>
</evidence>
<reference key="1">
    <citation type="journal article" date="2002" name="Nature">
        <title>Comparison of the genomes of two Xanthomonas pathogens with differing host specificities.</title>
        <authorList>
            <person name="da Silva A.C.R."/>
            <person name="Ferro J.A."/>
            <person name="Reinach F.C."/>
            <person name="Farah C.S."/>
            <person name="Furlan L.R."/>
            <person name="Quaggio R.B."/>
            <person name="Monteiro-Vitorello C.B."/>
            <person name="Van Sluys M.A."/>
            <person name="Almeida N.F. Jr."/>
            <person name="Alves L.M.C."/>
            <person name="do Amaral A.M."/>
            <person name="Bertolini M.C."/>
            <person name="Camargo L.E.A."/>
            <person name="Camarotte G."/>
            <person name="Cannavan F."/>
            <person name="Cardozo J."/>
            <person name="Chambergo F."/>
            <person name="Ciapina L.P."/>
            <person name="Cicarelli R.M.B."/>
            <person name="Coutinho L.L."/>
            <person name="Cursino-Santos J.R."/>
            <person name="El-Dorry H."/>
            <person name="Faria J.B."/>
            <person name="Ferreira A.J.S."/>
            <person name="Ferreira R.C.C."/>
            <person name="Ferro M.I.T."/>
            <person name="Formighieri E.F."/>
            <person name="Franco M.C."/>
            <person name="Greggio C.C."/>
            <person name="Gruber A."/>
            <person name="Katsuyama A.M."/>
            <person name="Kishi L.T."/>
            <person name="Leite R.P."/>
            <person name="Lemos E.G.M."/>
            <person name="Lemos M.V.F."/>
            <person name="Locali E.C."/>
            <person name="Machado M.A."/>
            <person name="Madeira A.M.B.N."/>
            <person name="Martinez-Rossi N.M."/>
            <person name="Martins E.C."/>
            <person name="Meidanis J."/>
            <person name="Menck C.F.M."/>
            <person name="Miyaki C.Y."/>
            <person name="Moon D.H."/>
            <person name="Moreira L.M."/>
            <person name="Novo M.T.M."/>
            <person name="Okura V.K."/>
            <person name="Oliveira M.C."/>
            <person name="Oliveira V.R."/>
            <person name="Pereira H.A."/>
            <person name="Rossi A."/>
            <person name="Sena J.A.D."/>
            <person name="Silva C."/>
            <person name="de Souza R.F."/>
            <person name="Spinola L.A.F."/>
            <person name="Takita M.A."/>
            <person name="Tamura R.E."/>
            <person name="Teixeira E.C."/>
            <person name="Tezza R.I.D."/>
            <person name="Trindade dos Santos M."/>
            <person name="Truffi D."/>
            <person name="Tsai S.M."/>
            <person name="White F.F."/>
            <person name="Setubal J.C."/>
            <person name="Kitajima J.P."/>
        </authorList>
    </citation>
    <scope>NUCLEOTIDE SEQUENCE [LARGE SCALE GENOMIC DNA]</scope>
    <source>
        <strain>ATCC 33913 / DSM 3586 / NCPPB 528 / LMG 568 / P 25</strain>
    </source>
</reference>
<comment type="function">
    <text evidence="1">Produces ATP from ADP in the presence of a proton gradient across the membrane. The alpha chain is a regulatory subunit.</text>
</comment>
<comment type="catalytic activity">
    <reaction evidence="1">
        <text>ATP + H2O + 4 H(+)(in) = ADP + phosphate + 5 H(+)(out)</text>
        <dbReference type="Rhea" id="RHEA:57720"/>
        <dbReference type="ChEBI" id="CHEBI:15377"/>
        <dbReference type="ChEBI" id="CHEBI:15378"/>
        <dbReference type="ChEBI" id="CHEBI:30616"/>
        <dbReference type="ChEBI" id="CHEBI:43474"/>
        <dbReference type="ChEBI" id="CHEBI:456216"/>
        <dbReference type="EC" id="7.1.2.2"/>
    </reaction>
</comment>
<comment type="subunit">
    <text evidence="1">F-type ATPases have 2 components, CF(1) - the catalytic core - and CF(0) - the membrane proton channel. CF(1) has five subunits: alpha(3), beta(3), gamma(1), delta(1), epsilon(1). CF(0) has three main subunits: a(1), b(2) and c(9-12). The alpha and beta chains form an alternating ring which encloses part of the gamma chain. CF(1) is attached to CF(0) by a central stalk formed by the gamma and epsilon chains, while a peripheral stalk is formed by the delta and b chains.</text>
</comment>
<comment type="subcellular location">
    <subcellularLocation>
        <location evidence="1">Cell inner membrane</location>
        <topology evidence="1">Peripheral membrane protein</topology>
    </subcellularLocation>
</comment>
<comment type="similarity">
    <text evidence="1">Belongs to the ATPase alpha/beta chains family.</text>
</comment>